<feature type="chain" id="PRO_0000150519" description="Olfactory receptor 3A2">
    <location>
        <begin position="1"/>
        <end position="315"/>
    </location>
</feature>
<feature type="topological domain" description="Extracellular" evidence="1">
    <location>
        <begin position="1"/>
        <end position="29"/>
    </location>
</feature>
<feature type="transmembrane region" description="Helical; Name=1" evidence="1">
    <location>
        <begin position="30"/>
        <end position="52"/>
    </location>
</feature>
<feature type="topological domain" description="Cytoplasmic" evidence="1">
    <location>
        <begin position="53"/>
        <end position="60"/>
    </location>
</feature>
<feature type="transmembrane region" description="Helical; Name=2" evidence="1">
    <location>
        <begin position="61"/>
        <end position="82"/>
    </location>
</feature>
<feature type="topological domain" description="Extracellular" evidence="1">
    <location>
        <begin position="83"/>
        <end position="103"/>
    </location>
</feature>
<feature type="transmembrane region" description="Helical; Name=3" evidence="1">
    <location>
        <begin position="104"/>
        <end position="123"/>
    </location>
</feature>
<feature type="topological domain" description="Cytoplasmic" evidence="1">
    <location>
        <begin position="124"/>
        <end position="143"/>
    </location>
</feature>
<feature type="transmembrane region" description="Helical; Name=4" evidence="1">
    <location>
        <begin position="144"/>
        <end position="161"/>
    </location>
</feature>
<feature type="topological domain" description="Extracellular" evidence="1">
    <location>
        <begin position="162"/>
        <end position="199"/>
    </location>
</feature>
<feature type="transmembrane region" description="Helical; Name=5" evidence="1">
    <location>
        <begin position="200"/>
        <end position="223"/>
    </location>
</feature>
<feature type="topological domain" description="Cytoplasmic" evidence="1">
    <location>
        <begin position="224"/>
        <end position="240"/>
    </location>
</feature>
<feature type="transmembrane region" description="Helical; Name=6" evidence="1">
    <location>
        <begin position="241"/>
        <end position="264"/>
    </location>
</feature>
<feature type="topological domain" description="Extracellular" evidence="1">
    <location>
        <begin position="265"/>
        <end position="275"/>
    </location>
</feature>
<feature type="transmembrane region" description="Helical; Name=7" evidence="1">
    <location>
        <begin position="276"/>
        <end position="295"/>
    </location>
</feature>
<feature type="topological domain" description="Cytoplasmic" evidence="1">
    <location>
        <begin position="296"/>
        <end position="315"/>
    </location>
</feature>
<feature type="glycosylation site" description="N-linked (GlcNAc...) asparagine" evidence="1">
    <location>
        <position position="8"/>
    </location>
</feature>
<feature type="disulfide bond" evidence="2">
    <location>
        <begin position="100"/>
        <end position="192"/>
    </location>
</feature>
<proteinExistence type="inferred from homology"/>
<evidence type="ECO:0000255" key="1"/>
<evidence type="ECO:0000255" key="2">
    <source>
        <dbReference type="PROSITE-ProRule" id="PRU00521"/>
    </source>
</evidence>
<evidence type="ECO:0000305" key="3"/>
<dbReference type="EMBL" id="AF101746">
    <property type="protein sequence ID" value="AAF03327.1"/>
    <property type="molecule type" value="Genomic_DNA"/>
</dbReference>
<dbReference type="SMR" id="Q9TU97"/>
<dbReference type="FunCoup" id="Q9TU97">
    <property type="interactions" value="327"/>
</dbReference>
<dbReference type="STRING" id="9598.ENSPTRP00000066614"/>
<dbReference type="GlyCosmos" id="Q9TU97">
    <property type="glycosylation" value="1 site, No reported glycans"/>
</dbReference>
<dbReference type="PaxDb" id="9598-ENSPTRP00000054937"/>
<dbReference type="eggNOG" id="ENOG502RU1B">
    <property type="taxonomic scope" value="Eukaryota"/>
</dbReference>
<dbReference type="InParanoid" id="Q9TU97"/>
<dbReference type="Proteomes" id="UP000002277">
    <property type="component" value="Unplaced"/>
</dbReference>
<dbReference type="GO" id="GO:0005886">
    <property type="term" value="C:plasma membrane"/>
    <property type="evidence" value="ECO:0000318"/>
    <property type="project" value="GO_Central"/>
</dbReference>
<dbReference type="GO" id="GO:0004930">
    <property type="term" value="F:G protein-coupled receptor activity"/>
    <property type="evidence" value="ECO:0007669"/>
    <property type="project" value="UniProtKB-KW"/>
</dbReference>
<dbReference type="GO" id="GO:0004984">
    <property type="term" value="F:olfactory receptor activity"/>
    <property type="evidence" value="ECO:0000318"/>
    <property type="project" value="GO_Central"/>
</dbReference>
<dbReference type="GO" id="GO:0007165">
    <property type="term" value="P:signal transduction"/>
    <property type="evidence" value="ECO:0000318"/>
    <property type="project" value="GO_Central"/>
</dbReference>
<dbReference type="CDD" id="cd15233">
    <property type="entry name" value="7tmA_OR3A-like"/>
    <property type="match status" value="1"/>
</dbReference>
<dbReference type="FunFam" id="1.20.1070.10:FF:000010">
    <property type="entry name" value="Olfactory receptor"/>
    <property type="match status" value="1"/>
</dbReference>
<dbReference type="Gene3D" id="1.20.1070.10">
    <property type="entry name" value="Rhodopsin 7-helix transmembrane proteins"/>
    <property type="match status" value="1"/>
</dbReference>
<dbReference type="InterPro" id="IPR000276">
    <property type="entry name" value="GPCR_Rhodpsn"/>
</dbReference>
<dbReference type="InterPro" id="IPR017452">
    <property type="entry name" value="GPCR_Rhodpsn_7TM"/>
</dbReference>
<dbReference type="InterPro" id="IPR000725">
    <property type="entry name" value="Olfact_rcpt"/>
</dbReference>
<dbReference type="PANTHER" id="PTHR48001">
    <property type="entry name" value="OLFACTORY RECEPTOR"/>
    <property type="match status" value="1"/>
</dbReference>
<dbReference type="Pfam" id="PF13853">
    <property type="entry name" value="7tm_4"/>
    <property type="match status" value="1"/>
</dbReference>
<dbReference type="PRINTS" id="PR00237">
    <property type="entry name" value="GPCRRHODOPSN"/>
</dbReference>
<dbReference type="PRINTS" id="PR00245">
    <property type="entry name" value="OLFACTORYR"/>
</dbReference>
<dbReference type="SUPFAM" id="SSF81321">
    <property type="entry name" value="Family A G protein-coupled receptor-like"/>
    <property type="match status" value="1"/>
</dbReference>
<dbReference type="PROSITE" id="PS00237">
    <property type="entry name" value="G_PROTEIN_RECEP_F1_1"/>
    <property type="match status" value="1"/>
</dbReference>
<dbReference type="PROSITE" id="PS50262">
    <property type="entry name" value="G_PROTEIN_RECEP_F1_2"/>
    <property type="match status" value="1"/>
</dbReference>
<name>OR3A2_PANTR</name>
<sequence>MEPEAGTNRTAVAEFILLGLVQTEEMQPVVFVLFLFAYLVTIGGNLSILAAILVEPKLHAPMYFFLGNLSVLDVGCITVTVPAMLGRLLSHKSTISYDACLSQLFFFHLLAGMDCFLLTAMAYDRFLAICWPLTYSTRMSQTVQRMLVAASWACAFTNALTHTVAMSTLNFCGPNEVNHFYCDLPQLFQLSCSSTQLNELLLFAVGFIMAGTPLVLIITSYSHVAAAVLRIRSVEGWKKAFSTCGSHLTVVCLFFGTGIFNYMRLGSEEASDKDKGVGVFNTVINPMLNPLIYSLRNPDVQGALWRIFLGRRSLT</sequence>
<accession>Q9TU97</accession>
<keyword id="KW-1003">Cell membrane</keyword>
<keyword id="KW-1015">Disulfide bond</keyword>
<keyword id="KW-0297">G-protein coupled receptor</keyword>
<keyword id="KW-0325">Glycoprotein</keyword>
<keyword id="KW-0472">Membrane</keyword>
<keyword id="KW-0552">Olfaction</keyword>
<keyword id="KW-0675">Receptor</keyword>
<keyword id="KW-1185">Reference proteome</keyword>
<keyword id="KW-0716">Sensory transduction</keyword>
<keyword id="KW-0807">Transducer</keyword>
<keyword id="KW-0812">Transmembrane</keyword>
<keyword id="KW-1133">Transmembrane helix</keyword>
<protein>
    <recommendedName>
        <fullName>Olfactory receptor 3A2</fullName>
    </recommendedName>
</protein>
<comment type="function">
    <text evidence="3">Odorant receptor.</text>
</comment>
<comment type="subcellular location">
    <subcellularLocation>
        <location>Cell membrane</location>
        <topology>Multi-pass membrane protein</topology>
    </subcellularLocation>
</comment>
<comment type="similarity">
    <text evidence="2">Belongs to the G-protein coupled receptor 1 family.</text>
</comment>
<gene>
    <name type="primary">OR3A2</name>
</gene>
<organism>
    <name type="scientific">Pan troglodytes</name>
    <name type="common">Chimpanzee</name>
    <dbReference type="NCBI Taxonomy" id="9598"/>
    <lineage>
        <taxon>Eukaryota</taxon>
        <taxon>Metazoa</taxon>
        <taxon>Chordata</taxon>
        <taxon>Craniata</taxon>
        <taxon>Vertebrata</taxon>
        <taxon>Euteleostomi</taxon>
        <taxon>Mammalia</taxon>
        <taxon>Eutheria</taxon>
        <taxon>Euarchontoglires</taxon>
        <taxon>Primates</taxon>
        <taxon>Haplorrhini</taxon>
        <taxon>Catarrhini</taxon>
        <taxon>Hominidae</taxon>
        <taxon>Pan</taxon>
    </lineage>
</organism>
<reference key="1">
    <citation type="journal article" date="1999" name="Genomics">
        <title>Primate evolution of an olfactory receptor cluster: diversification by gene conversion and recent emergence of pseudogenes.</title>
        <authorList>
            <person name="Sharon D."/>
            <person name="Glusman G."/>
            <person name="Pilpel Y."/>
            <person name="Khen M."/>
            <person name="Gruetzner F."/>
            <person name="Haaf T."/>
            <person name="Lancet D."/>
        </authorList>
    </citation>
    <scope>NUCLEOTIDE SEQUENCE [GENOMIC DNA]</scope>
</reference>